<keyword id="KW-0002">3D-structure</keyword>
<keyword id="KW-0195">Cyclin</keyword>
<keyword id="KW-1185">Reference proteome</keyword>
<keyword id="KW-0804">Transcription</keyword>
<keyword id="KW-0805">Transcription regulation</keyword>
<comment type="function">
    <text>Regulatory component of the TFIIK complex (KIN28-CCL1 dimer) which is the protein kinase component of transcription factor IIH (TFIIH) and phosphorylates the C-terminal domain of RNA polymerase II during transition from transcription to elongation after preinitiation complex (PIC) formation, thereby positively regulating transcription. TFIIH (or factor B) is essential for both basal and activated transcription, and is involved in nucleotide excision repair (NER) of damaged DNA. TFIIH has DNA-dependent ATPase activity and is essential for polymerase II transcription in vitro.</text>
</comment>
<comment type="subunit">
    <text evidence="2 4">CCL1 and KIN28 form the TFIIK complex, a component of TFIIH holo complex. Component of a complex consisting of KIN28, CCL1 and TFB3.</text>
</comment>
<comment type="interaction">
    <interactant intactId="EBI-4385">
        <id>P37366</id>
    </interactant>
    <interactant intactId="EBI-9691">
        <id>P06242</id>
        <label>KIN28</label>
    </interactant>
    <organismsDiffer>false</organismsDiffer>
    <experiments>8</experiments>
</comment>
<comment type="interaction">
    <interactant intactId="EBI-4385">
        <id>P37366</id>
    </interactant>
    <interactant intactId="EBI-13327">
        <id>P17157</id>
        <label>PHO85</label>
    </interactant>
    <organismsDiffer>false</organismsDiffer>
    <experiments>2</experiments>
</comment>
<comment type="miscellaneous">
    <text evidence="3">Present with 8700 molecules/cell in log phase SD medium.</text>
</comment>
<comment type="similarity">
    <text evidence="5">Belongs to the cyclin family. Cyclin C subfamily.</text>
</comment>
<name>CCL1_YEAST</name>
<protein>
    <recommendedName>
        <fullName>Cyclin CCL1</fullName>
    </recommendedName>
</protein>
<evidence type="ECO:0000256" key="1">
    <source>
        <dbReference type="SAM" id="MobiDB-lite"/>
    </source>
</evidence>
<evidence type="ECO:0000269" key="2">
    <source>
    </source>
</evidence>
<evidence type="ECO:0000269" key="3">
    <source>
    </source>
</evidence>
<evidence type="ECO:0000269" key="4">
    <source>
    </source>
</evidence>
<evidence type="ECO:0000305" key="5"/>
<evidence type="ECO:0007829" key="6">
    <source>
        <dbReference type="PDB" id="7KUE"/>
    </source>
</evidence>
<proteinExistence type="evidence at protein level"/>
<gene>
    <name type="primary">CCL1</name>
    <name type="ordered locus">YPR025C</name>
    <name type="ORF">YP9367.05C</name>
</gene>
<dbReference type="EMBL" id="X71902">
    <property type="protein sequence ID" value="CAA50721.1"/>
    <property type="molecule type" value="Genomic_DNA"/>
</dbReference>
<dbReference type="EMBL" id="Z49274">
    <property type="protein sequence ID" value="CAA89279.1"/>
    <property type="molecule type" value="Genomic_DNA"/>
</dbReference>
<dbReference type="EMBL" id="Z71255">
    <property type="protein sequence ID" value="CAA95021.1"/>
    <property type="molecule type" value="Genomic_DNA"/>
</dbReference>
<dbReference type="EMBL" id="BK006949">
    <property type="protein sequence ID" value="DAA11451.1"/>
    <property type="molecule type" value="Genomic_DNA"/>
</dbReference>
<dbReference type="PIR" id="S39383">
    <property type="entry name" value="S39383"/>
</dbReference>
<dbReference type="RefSeq" id="NP_015350.1">
    <property type="nucleotide sequence ID" value="NM_001184122.1"/>
</dbReference>
<dbReference type="PDB" id="6XI8">
    <property type="method" value="EM"/>
    <property type="resolution" value="3.64 A"/>
    <property type="chains" value="B=47-370"/>
</dbReference>
<dbReference type="PDB" id="7KUE">
    <property type="method" value="EM"/>
    <property type="resolution" value="3.50 A"/>
    <property type="chains" value="B=1-393"/>
</dbReference>
<dbReference type="PDBsum" id="6XI8"/>
<dbReference type="PDBsum" id="7KUE"/>
<dbReference type="EMDB" id="EMD-22191"/>
<dbReference type="EMDB" id="EMD-23036"/>
<dbReference type="SMR" id="P37366"/>
<dbReference type="BioGRID" id="36202">
    <property type="interactions" value="160"/>
</dbReference>
<dbReference type="ComplexPortal" id="CPX-1659">
    <property type="entry name" value="General transcription factor TFIIH complex"/>
</dbReference>
<dbReference type="ComplexPortal" id="CPX-1660">
    <property type="entry name" value="General transcription factor complex TFIIK"/>
</dbReference>
<dbReference type="DIP" id="DIP-2258N"/>
<dbReference type="FunCoup" id="P37366">
    <property type="interactions" value="1095"/>
</dbReference>
<dbReference type="IntAct" id="P37366">
    <property type="interactions" value="60"/>
</dbReference>
<dbReference type="MINT" id="P37366"/>
<dbReference type="STRING" id="4932.YPR025C"/>
<dbReference type="iPTMnet" id="P37366"/>
<dbReference type="PaxDb" id="4932-YPR025C"/>
<dbReference type="PeptideAtlas" id="P37366"/>
<dbReference type="EnsemblFungi" id="YPR025C_mRNA">
    <property type="protein sequence ID" value="YPR025C"/>
    <property type="gene ID" value="YPR025C"/>
</dbReference>
<dbReference type="GeneID" id="856136"/>
<dbReference type="KEGG" id="sce:YPR025C"/>
<dbReference type="AGR" id="SGD:S000006229"/>
<dbReference type="SGD" id="S000006229">
    <property type="gene designation" value="CCL1"/>
</dbReference>
<dbReference type="VEuPathDB" id="FungiDB:YPR025C"/>
<dbReference type="eggNOG" id="KOG2496">
    <property type="taxonomic scope" value="Eukaryota"/>
</dbReference>
<dbReference type="GeneTree" id="ENSGT00940000168613"/>
<dbReference type="HOGENOM" id="CLU_022620_4_2_1"/>
<dbReference type="InParanoid" id="P37366"/>
<dbReference type="OMA" id="FRVEQNT"/>
<dbReference type="OrthoDB" id="340962at2759"/>
<dbReference type="BioCyc" id="YEAST:G3O-34185-MONOMER"/>
<dbReference type="Reactome" id="R-SCE-113418">
    <property type="pathway name" value="Formation of the Early Elongation Complex"/>
</dbReference>
<dbReference type="Reactome" id="R-SCE-674695">
    <property type="pathway name" value="RNA Polymerase II Pre-transcription Events"/>
</dbReference>
<dbReference type="Reactome" id="R-SCE-6781823">
    <property type="pathway name" value="Formation of TC-NER Pre-Incision Complex"/>
</dbReference>
<dbReference type="Reactome" id="R-SCE-6782135">
    <property type="pathway name" value="Dual incision in TC-NER"/>
</dbReference>
<dbReference type="Reactome" id="R-SCE-6782210">
    <property type="pathway name" value="Gap-filling DNA repair synthesis and ligation in TC-NER"/>
</dbReference>
<dbReference type="Reactome" id="R-SCE-6796648">
    <property type="pathway name" value="TP53 Regulates Transcription of DNA Repair Genes"/>
</dbReference>
<dbReference type="Reactome" id="R-SCE-72086">
    <property type="pathway name" value="mRNA Capping"/>
</dbReference>
<dbReference type="Reactome" id="R-SCE-73772">
    <property type="pathway name" value="RNA Polymerase I Promoter Escape"/>
</dbReference>
<dbReference type="Reactome" id="R-SCE-73776">
    <property type="pathway name" value="RNA Polymerase II Promoter Escape"/>
</dbReference>
<dbReference type="Reactome" id="R-SCE-73779">
    <property type="pathway name" value="RNA Polymerase II Transcription Pre-Initiation And Promoter Opening"/>
</dbReference>
<dbReference type="Reactome" id="R-SCE-75953">
    <property type="pathway name" value="RNA Polymerase II Transcription Initiation"/>
</dbReference>
<dbReference type="Reactome" id="R-SCE-76042">
    <property type="pathway name" value="RNA Polymerase II Transcription Initiation And Promoter Clearance"/>
</dbReference>
<dbReference type="Reactome" id="R-SCE-77075">
    <property type="pathway name" value="RNA Pol II CTD phosphorylation and interaction with CE"/>
</dbReference>
<dbReference type="BioGRID-ORCS" id="856136">
    <property type="hits" value="5 hits in 10 CRISPR screens"/>
</dbReference>
<dbReference type="PRO" id="PR:P37366"/>
<dbReference type="Proteomes" id="UP000002311">
    <property type="component" value="Chromosome XVI"/>
</dbReference>
<dbReference type="RNAct" id="P37366">
    <property type="molecule type" value="protein"/>
</dbReference>
<dbReference type="GO" id="GO:0005739">
    <property type="term" value="C:mitochondrion"/>
    <property type="evidence" value="ECO:0007005"/>
    <property type="project" value="SGD"/>
</dbReference>
<dbReference type="GO" id="GO:0005634">
    <property type="term" value="C:nucleus"/>
    <property type="evidence" value="ECO:0000318"/>
    <property type="project" value="GO_Central"/>
</dbReference>
<dbReference type="GO" id="GO:0005675">
    <property type="term" value="C:transcription factor TFIIH holo complex"/>
    <property type="evidence" value="ECO:0000314"/>
    <property type="project" value="SGD"/>
</dbReference>
<dbReference type="GO" id="GO:0070985">
    <property type="term" value="C:transcription factor TFIIK complex"/>
    <property type="evidence" value="ECO:0000314"/>
    <property type="project" value="ComplexPortal"/>
</dbReference>
<dbReference type="GO" id="GO:0016538">
    <property type="term" value="F:cyclin-dependent protein serine/threonine kinase regulator activity"/>
    <property type="evidence" value="ECO:0000316"/>
    <property type="project" value="SGD"/>
</dbReference>
<dbReference type="GO" id="GO:0006995">
    <property type="term" value="P:cellular response to nitrogen starvation"/>
    <property type="evidence" value="ECO:0000315"/>
    <property type="project" value="GO_Central"/>
</dbReference>
<dbReference type="GO" id="GO:0006289">
    <property type="term" value="P:nucleotide-excision repair"/>
    <property type="evidence" value="ECO:0000314"/>
    <property type="project" value="ComplexPortal"/>
</dbReference>
<dbReference type="GO" id="GO:1905866">
    <property type="term" value="P:positive regulation of Atg1/ULK1 kinase complex assembly"/>
    <property type="evidence" value="ECO:0000315"/>
    <property type="project" value="GO_Central"/>
</dbReference>
<dbReference type="GO" id="GO:0010508">
    <property type="term" value="P:positive regulation of autophagy"/>
    <property type="evidence" value="ECO:0000315"/>
    <property type="project" value="SGD"/>
</dbReference>
<dbReference type="GO" id="GO:0006357">
    <property type="term" value="P:regulation of transcription by RNA polymerase II"/>
    <property type="evidence" value="ECO:0007669"/>
    <property type="project" value="InterPro"/>
</dbReference>
<dbReference type="GO" id="GO:0006366">
    <property type="term" value="P:transcription by RNA polymerase II"/>
    <property type="evidence" value="ECO:0000314"/>
    <property type="project" value="SGD"/>
</dbReference>
<dbReference type="GO" id="GO:0006367">
    <property type="term" value="P:transcription initiation at RNA polymerase II promoter"/>
    <property type="evidence" value="ECO:0000314"/>
    <property type="project" value="ComplexPortal"/>
</dbReference>
<dbReference type="CDD" id="cd20524">
    <property type="entry name" value="CYCLIN_CCNH_rpt1"/>
    <property type="match status" value="1"/>
</dbReference>
<dbReference type="CDD" id="cd20525">
    <property type="entry name" value="CYCLIN_CCNH_rpt2"/>
    <property type="match status" value="1"/>
</dbReference>
<dbReference type="FunFam" id="1.10.472.10:FF:000128">
    <property type="entry name" value="TFIIK subunit"/>
    <property type="match status" value="1"/>
</dbReference>
<dbReference type="FunFam" id="1.10.472.10:FF:000155">
    <property type="entry name" value="TFIIK subunit"/>
    <property type="match status" value="1"/>
</dbReference>
<dbReference type="Gene3D" id="1.10.472.10">
    <property type="entry name" value="Cyclin-like"/>
    <property type="match status" value="2"/>
</dbReference>
<dbReference type="InterPro" id="IPR013763">
    <property type="entry name" value="Cyclin-like_dom"/>
</dbReference>
<dbReference type="InterPro" id="IPR036915">
    <property type="entry name" value="Cyclin-like_sf"/>
</dbReference>
<dbReference type="InterPro" id="IPR043198">
    <property type="entry name" value="Cyclin/Ssn8"/>
</dbReference>
<dbReference type="InterPro" id="IPR031658">
    <property type="entry name" value="Cyclin_C_2"/>
</dbReference>
<dbReference type="InterPro" id="IPR006671">
    <property type="entry name" value="Cyclin_N"/>
</dbReference>
<dbReference type="InterPro" id="IPR027081">
    <property type="entry name" value="CyclinH/Ccl1"/>
</dbReference>
<dbReference type="NCBIfam" id="TIGR00569">
    <property type="entry name" value="ccl1"/>
    <property type="match status" value="1"/>
</dbReference>
<dbReference type="PANTHER" id="PTHR10026">
    <property type="entry name" value="CYCLIN"/>
    <property type="match status" value="1"/>
</dbReference>
<dbReference type="Pfam" id="PF16899">
    <property type="entry name" value="Cyclin_C_2"/>
    <property type="match status" value="1"/>
</dbReference>
<dbReference type="Pfam" id="PF00134">
    <property type="entry name" value="Cyclin_N"/>
    <property type="match status" value="1"/>
</dbReference>
<dbReference type="SMART" id="SM00385">
    <property type="entry name" value="CYCLIN"/>
    <property type="match status" value="1"/>
</dbReference>
<dbReference type="SUPFAM" id="SSF47954">
    <property type="entry name" value="Cyclin-like"/>
    <property type="match status" value="2"/>
</dbReference>
<sequence>MTDIQLNGKSTLDTPSATMSAKEKEAKLKSADENNKPPNYKRISDDDLYRHSSQYRMWSYTKDQLQEKRVDTNARAIAYIEENLLKFREAHNLTEEEIKVLEAKAIPLTMEEELDLVNFYAKKVQVIAQHLNLPTEVVATAISFFRRFFLENSVMQIDPKSIVHTTIFLACKSENYFISVDSFAQKAKSTRDSVLKFEFKLLESLKFSLLNHHPYKPLHGFFLDIQNVLYGKVDLNYMGQIYDRCKKRITAALLTDVVYFYTPPQITLATLLIEDEALVTRYLETKFPSREGSQESVPGNEKEEPQNDASTTEKNKEKSTESEEYSIDSAKLLTIIRECKSIIEDCKPPSTEEAKKIAAKNYYCQNPSTLIQKLKRKLNGEDTSSTVEKKQKT</sequence>
<accession>P37366</accession>
<accession>D6W435</accession>
<organism>
    <name type="scientific">Saccharomyces cerevisiae (strain ATCC 204508 / S288c)</name>
    <name type="common">Baker's yeast</name>
    <dbReference type="NCBI Taxonomy" id="559292"/>
    <lineage>
        <taxon>Eukaryota</taxon>
        <taxon>Fungi</taxon>
        <taxon>Dikarya</taxon>
        <taxon>Ascomycota</taxon>
        <taxon>Saccharomycotina</taxon>
        <taxon>Saccharomycetes</taxon>
        <taxon>Saccharomycetales</taxon>
        <taxon>Saccharomycetaceae</taxon>
        <taxon>Saccharomyces</taxon>
    </lineage>
</organism>
<reference key="1">
    <citation type="journal article" date="1993" name="J. Mol. Biol.">
        <title>The kin28 protein kinase is associated with a cyclin in Saccharomyces cerevisiae.</title>
        <authorList>
            <person name="Valay J.G."/>
            <person name="Simon M."/>
            <person name="Faye G."/>
        </authorList>
    </citation>
    <scope>NUCLEOTIDE SEQUENCE [GENOMIC DNA]</scope>
</reference>
<reference key="2">
    <citation type="journal article" date="1997" name="Nature">
        <title>The nucleotide sequence of Saccharomyces cerevisiae chromosome XVI.</title>
        <authorList>
            <person name="Bussey H."/>
            <person name="Storms R.K."/>
            <person name="Ahmed A."/>
            <person name="Albermann K."/>
            <person name="Allen E."/>
            <person name="Ansorge W."/>
            <person name="Araujo R."/>
            <person name="Aparicio A."/>
            <person name="Barrell B.G."/>
            <person name="Badcock K."/>
            <person name="Benes V."/>
            <person name="Botstein D."/>
            <person name="Bowman S."/>
            <person name="Brueckner M."/>
            <person name="Carpenter J."/>
            <person name="Cherry J.M."/>
            <person name="Chung E."/>
            <person name="Churcher C.M."/>
            <person name="Coster F."/>
            <person name="Davis K."/>
            <person name="Davis R.W."/>
            <person name="Dietrich F.S."/>
            <person name="Delius H."/>
            <person name="DiPaolo T."/>
            <person name="Dubois E."/>
            <person name="Duesterhoeft A."/>
            <person name="Duncan M."/>
            <person name="Floeth M."/>
            <person name="Fortin N."/>
            <person name="Friesen J.D."/>
            <person name="Fritz C."/>
            <person name="Goffeau A."/>
            <person name="Hall J."/>
            <person name="Hebling U."/>
            <person name="Heumann K."/>
            <person name="Hilbert H."/>
            <person name="Hillier L.W."/>
            <person name="Hunicke-Smith S."/>
            <person name="Hyman R.W."/>
            <person name="Johnston M."/>
            <person name="Kalman S."/>
            <person name="Kleine K."/>
            <person name="Komp C."/>
            <person name="Kurdi O."/>
            <person name="Lashkari D."/>
            <person name="Lew H."/>
            <person name="Lin A."/>
            <person name="Lin D."/>
            <person name="Louis E.J."/>
            <person name="Marathe R."/>
            <person name="Messenguy F."/>
            <person name="Mewes H.-W."/>
            <person name="Mirtipati S."/>
            <person name="Moestl D."/>
            <person name="Mueller-Auer S."/>
            <person name="Namath A."/>
            <person name="Nentwich U."/>
            <person name="Oefner P."/>
            <person name="Pearson D."/>
            <person name="Petel F.X."/>
            <person name="Pohl T.M."/>
            <person name="Purnelle B."/>
            <person name="Rajandream M.A."/>
            <person name="Rechmann S."/>
            <person name="Rieger M."/>
            <person name="Riles L."/>
            <person name="Roberts D."/>
            <person name="Schaefer M."/>
            <person name="Scharfe M."/>
            <person name="Scherens B."/>
            <person name="Schramm S."/>
            <person name="Schroeder M."/>
            <person name="Sdicu A.-M."/>
            <person name="Tettelin H."/>
            <person name="Urrestarazu L.A."/>
            <person name="Ushinsky S."/>
            <person name="Vierendeels F."/>
            <person name="Vissers S."/>
            <person name="Voss H."/>
            <person name="Walsh S.V."/>
            <person name="Wambutt R."/>
            <person name="Wang Y."/>
            <person name="Wedler E."/>
            <person name="Wedler H."/>
            <person name="Winnett E."/>
            <person name="Zhong W.-W."/>
            <person name="Zollner A."/>
            <person name="Vo D.H."/>
            <person name="Hani J."/>
        </authorList>
    </citation>
    <scope>NUCLEOTIDE SEQUENCE [LARGE SCALE GENOMIC DNA]</scope>
    <source>
        <strain>ATCC 204508 / S288c</strain>
    </source>
</reference>
<reference key="3">
    <citation type="journal article" date="2014" name="G3 (Bethesda)">
        <title>The reference genome sequence of Saccharomyces cerevisiae: Then and now.</title>
        <authorList>
            <person name="Engel S.R."/>
            <person name="Dietrich F.S."/>
            <person name="Fisk D.G."/>
            <person name="Binkley G."/>
            <person name="Balakrishnan R."/>
            <person name="Costanzo M.C."/>
            <person name="Dwight S.S."/>
            <person name="Hitz B.C."/>
            <person name="Karra K."/>
            <person name="Nash R.S."/>
            <person name="Weng S."/>
            <person name="Wong E.D."/>
            <person name="Lloyd P."/>
            <person name="Skrzypek M.S."/>
            <person name="Miyasato S.R."/>
            <person name="Simison M."/>
            <person name="Cherry J.M."/>
        </authorList>
    </citation>
    <scope>GENOME REANNOTATION</scope>
    <source>
        <strain>ATCC 204508 / S288c</strain>
    </source>
</reference>
<reference key="4">
    <citation type="journal article" date="1997" name="J. Biol. Chem.">
        <title>Genes for Tfb2, Tfb3, and Tfb4 subunits of yeast transcription/repair factor IIH. Homology to human cyclin-dependent kinase activating kinase and IIH subunits.</title>
        <authorList>
            <person name="Feaver W.J."/>
            <person name="Henry N.L."/>
            <person name="Wang Z."/>
            <person name="Wu X."/>
            <person name="Svejstrup J.Q."/>
            <person name="Bushnell D.A."/>
            <person name="Friedberg E.C."/>
            <person name="Kornberg R.D."/>
        </authorList>
    </citation>
    <scope>IDENTIFICATION IN A COMPLEX WITH KIN28 AND TFB3</scope>
    <source>
        <strain>DBY2019</strain>
    </source>
</reference>
<reference key="5">
    <citation type="journal article" date="2002" name="Mol. Cell. Biol.">
        <title>Kin28 is found within TFIIH and a Kin28-Ccl1-Tfb3 trimer complex with differential sensitivities to T-loop phosphorylation.</title>
        <authorList>
            <person name="Keogh M.-C."/>
            <person name="Cho E.-J."/>
            <person name="Podolny V."/>
            <person name="Buratowski S."/>
        </authorList>
    </citation>
    <scope>SUBUNIT</scope>
</reference>
<reference key="6">
    <citation type="journal article" date="2003" name="Nature">
        <title>Global analysis of protein expression in yeast.</title>
        <authorList>
            <person name="Ghaemmaghami S."/>
            <person name="Huh W.-K."/>
            <person name="Bower K."/>
            <person name="Howson R.W."/>
            <person name="Belle A."/>
            <person name="Dephoure N."/>
            <person name="O'Shea E.K."/>
            <person name="Weissman J.S."/>
        </authorList>
    </citation>
    <scope>LEVEL OF PROTEIN EXPRESSION [LARGE SCALE ANALYSIS]</scope>
</reference>
<feature type="chain" id="PRO_0000080504" description="Cyclin CCL1">
    <location>
        <begin position="1"/>
        <end position="393"/>
    </location>
</feature>
<feature type="region of interest" description="Disordered" evidence="1">
    <location>
        <begin position="1"/>
        <end position="45"/>
    </location>
</feature>
<feature type="region of interest" description="Disordered" evidence="1">
    <location>
        <begin position="289"/>
        <end position="325"/>
    </location>
</feature>
<feature type="compositionally biased region" description="Polar residues" evidence="1">
    <location>
        <begin position="1"/>
        <end position="19"/>
    </location>
</feature>
<feature type="compositionally biased region" description="Basic and acidic residues" evidence="1">
    <location>
        <begin position="21"/>
        <end position="35"/>
    </location>
</feature>
<feature type="compositionally biased region" description="Basic and acidic residues" evidence="1">
    <location>
        <begin position="300"/>
        <end position="321"/>
    </location>
</feature>
<feature type="helix" evidence="6">
    <location>
        <begin position="53"/>
        <end position="56"/>
    </location>
</feature>
<feature type="helix" evidence="6">
    <location>
        <begin position="62"/>
        <end position="72"/>
    </location>
</feature>
<feature type="helix" evidence="6">
    <location>
        <begin position="112"/>
        <end position="130"/>
    </location>
</feature>
<feature type="helix" evidence="6">
    <location>
        <begin position="135"/>
        <end position="151"/>
    </location>
</feature>
<feature type="turn" evidence="6">
    <location>
        <begin position="154"/>
        <end position="156"/>
    </location>
</feature>
<feature type="helix" evidence="6">
    <location>
        <begin position="159"/>
        <end position="173"/>
    </location>
</feature>
<feature type="helix" evidence="6">
    <location>
        <begin position="180"/>
        <end position="185"/>
    </location>
</feature>
<feature type="turn" evidence="6">
    <location>
        <begin position="186"/>
        <end position="188"/>
    </location>
</feature>
<feature type="turn" evidence="6">
    <location>
        <begin position="193"/>
        <end position="197"/>
    </location>
</feature>
<feature type="helix" evidence="6">
    <location>
        <begin position="199"/>
        <end position="205"/>
    </location>
</feature>
<feature type="helix" evidence="6">
    <location>
        <begin position="215"/>
        <end position="221"/>
    </location>
</feature>
<feature type="helix" evidence="6">
    <location>
        <begin position="224"/>
        <end position="228"/>
    </location>
</feature>
<feature type="helix" evidence="6">
    <location>
        <begin position="236"/>
        <end position="239"/>
    </location>
</feature>
<feature type="turn" evidence="6">
    <location>
        <begin position="242"/>
        <end position="244"/>
    </location>
</feature>
<feature type="helix" evidence="6">
    <location>
        <begin position="245"/>
        <end position="254"/>
    </location>
</feature>
<feature type="turn" evidence="6">
    <location>
        <begin position="258"/>
        <end position="260"/>
    </location>
</feature>
<feature type="helix" evidence="6">
    <location>
        <begin position="263"/>
        <end position="270"/>
    </location>
</feature>
<feature type="helix" evidence="6">
    <location>
        <begin position="271"/>
        <end position="274"/>
    </location>
</feature>
<feature type="turn" evidence="6">
    <location>
        <begin position="275"/>
        <end position="278"/>
    </location>
</feature>
<feature type="helix" evidence="6">
    <location>
        <begin position="279"/>
        <end position="286"/>
    </location>
</feature>
<feature type="helix" evidence="6">
    <location>
        <begin position="329"/>
        <end position="343"/>
    </location>
</feature>